<protein>
    <recommendedName>
        <fullName evidence="1">Nucleoid-associated protein SPJ_1041</fullName>
    </recommendedName>
</protein>
<sequence length="99" mass="10936">MMNMQNMMRQAQKLQKQMEQSQAELAAMQFVGKSAQDLVQATLTGDKKVVSIDFNPAVVDPEDLETLSDMTVQAINSALEQIDETTKKKLGAFAGKLPF</sequence>
<feature type="chain" id="PRO_1000197680" description="Nucleoid-associated protein SPJ_1041">
    <location>
        <begin position="1"/>
        <end position="99"/>
    </location>
</feature>
<proteinExistence type="inferred from homology"/>
<name>Y1041_STRZJ</name>
<keyword id="KW-0963">Cytoplasm</keyword>
<keyword id="KW-0238">DNA-binding</keyword>
<evidence type="ECO:0000255" key="1">
    <source>
        <dbReference type="HAMAP-Rule" id="MF_00274"/>
    </source>
</evidence>
<accession>C1CE90</accession>
<comment type="function">
    <text evidence="1">Binds to DNA and alters its conformation. May be involved in regulation of gene expression, nucleoid organization and DNA protection.</text>
</comment>
<comment type="subunit">
    <text evidence="1">Homodimer.</text>
</comment>
<comment type="subcellular location">
    <subcellularLocation>
        <location evidence="1">Cytoplasm</location>
        <location evidence="1">Nucleoid</location>
    </subcellularLocation>
</comment>
<comment type="similarity">
    <text evidence="1">Belongs to the YbaB/EbfC family.</text>
</comment>
<gene>
    <name type="ordered locus">SPJ_1041</name>
</gene>
<dbReference type="EMBL" id="CP000919">
    <property type="protein sequence ID" value="ACO20104.1"/>
    <property type="molecule type" value="Genomic_DNA"/>
</dbReference>
<dbReference type="RefSeq" id="WP_000981526.1">
    <property type="nucleotide sequence ID" value="NC_012466.1"/>
</dbReference>
<dbReference type="SMR" id="C1CE90"/>
<dbReference type="KEGG" id="sjj:SPJ_1041"/>
<dbReference type="HOGENOM" id="CLU_140930_1_1_9"/>
<dbReference type="Proteomes" id="UP000002206">
    <property type="component" value="Chromosome"/>
</dbReference>
<dbReference type="GO" id="GO:0043590">
    <property type="term" value="C:bacterial nucleoid"/>
    <property type="evidence" value="ECO:0007669"/>
    <property type="project" value="UniProtKB-UniRule"/>
</dbReference>
<dbReference type="GO" id="GO:0005829">
    <property type="term" value="C:cytosol"/>
    <property type="evidence" value="ECO:0007669"/>
    <property type="project" value="TreeGrafter"/>
</dbReference>
<dbReference type="GO" id="GO:0003677">
    <property type="term" value="F:DNA binding"/>
    <property type="evidence" value="ECO:0007669"/>
    <property type="project" value="UniProtKB-UniRule"/>
</dbReference>
<dbReference type="FunFam" id="3.30.1310.10:FF:000005">
    <property type="entry name" value="Nucleoid-associated protein SPAR113_1167"/>
    <property type="match status" value="1"/>
</dbReference>
<dbReference type="Gene3D" id="3.30.1310.10">
    <property type="entry name" value="Nucleoid-associated protein YbaB-like domain"/>
    <property type="match status" value="1"/>
</dbReference>
<dbReference type="HAMAP" id="MF_00274">
    <property type="entry name" value="DNA_YbaB_EbfC"/>
    <property type="match status" value="1"/>
</dbReference>
<dbReference type="InterPro" id="IPR036894">
    <property type="entry name" value="YbaB-like_sf"/>
</dbReference>
<dbReference type="InterPro" id="IPR004401">
    <property type="entry name" value="YbaB/EbfC"/>
</dbReference>
<dbReference type="NCBIfam" id="TIGR00103">
    <property type="entry name" value="DNA_YbaB_EbfC"/>
    <property type="match status" value="1"/>
</dbReference>
<dbReference type="PANTHER" id="PTHR33449">
    <property type="entry name" value="NUCLEOID-ASSOCIATED PROTEIN YBAB"/>
    <property type="match status" value="1"/>
</dbReference>
<dbReference type="PANTHER" id="PTHR33449:SF1">
    <property type="entry name" value="NUCLEOID-ASSOCIATED PROTEIN YBAB"/>
    <property type="match status" value="1"/>
</dbReference>
<dbReference type="Pfam" id="PF02575">
    <property type="entry name" value="YbaB_DNA_bd"/>
    <property type="match status" value="1"/>
</dbReference>
<dbReference type="PIRSF" id="PIRSF004555">
    <property type="entry name" value="UCP004555"/>
    <property type="match status" value="1"/>
</dbReference>
<dbReference type="SUPFAM" id="SSF82607">
    <property type="entry name" value="YbaB-like"/>
    <property type="match status" value="1"/>
</dbReference>
<organism>
    <name type="scientific">Streptococcus pneumoniae (strain JJA)</name>
    <dbReference type="NCBI Taxonomy" id="488222"/>
    <lineage>
        <taxon>Bacteria</taxon>
        <taxon>Bacillati</taxon>
        <taxon>Bacillota</taxon>
        <taxon>Bacilli</taxon>
        <taxon>Lactobacillales</taxon>
        <taxon>Streptococcaceae</taxon>
        <taxon>Streptococcus</taxon>
    </lineage>
</organism>
<reference key="1">
    <citation type="journal article" date="2010" name="Genome Biol.">
        <title>Structure and dynamics of the pan-genome of Streptococcus pneumoniae and closely related species.</title>
        <authorList>
            <person name="Donati C."/>
            <person name="Hiller N.L."/>
            <person name="Tettelin H."/>
            <person name="Muzzi A."/>
            <person name="Croucher N.J."/>
            <person name="Angiuoli S.V."/>
            <person name="Oggioni M."/>
            <person name="Dunning Hotopp J.C."/>
            <person name="Hu F.Z."/>
            <person name="Riley D.R."/>
            <person name="Covacci A."/>
            <person name="Mitchell T.J."/>
            <person name="Bentley S.D."/>
            <person name="Kilian M."/>
            <person name="Ehrlich G.D."/>
            <person name="Rappuoli R."/>
            <person name="Moxon E.R."/>
            <person name="Masignani V."/>
        </authorList>
    </citation>
    <scope>NUCLEOTIDE SEQUENCE [LARGE SCALE GENOMIC DNA]</scope>
    <source>
        <strain>JJA</strain>
    </source>
</reference>